<evidence type="ECO:0000255" key="1">
    <source>
        <dbReference type="HAMAP-Rule" id="MF_00006"/>
    </source>
</evidence>
<keyword id="KW-0028">Amino-acid biosynthesis</keyword>
<keyword id="KW-0055">Arginine biosynthesis</keyword>
<keyword id="KW-0963">Cytoplasm</keyword>
<keyword id="KW-0456">Lyase</keyword>
<dbReference type="EC" id="4.3.2.1" evidence="1"/>
<dbReference type="EMBL" id="CP000094">
    <property type="protein sequence ID" value="ABA74593.1"/>
    <property type="molecule type" value="Genomic_DNA"/>
</dbReference>
<dbReference type="SMR" id="Q3KCB2"/>
<dbReference type="KEGG" id="pfo:Pfl01_2852"/>
<dbReference type="eggNOG" id="COG0165">
    <property type="taxonomic scope" value="Bacteria"/>
</dbReference>
<dbReference type="HOGENOM" id="CLU_027272_2_2_6"/>
<dbReference type="UniPathway" id="UPA00068">
    <property type="reaction ID" value="UER00114"/>
</dbReference>
<dbReference type="Proteomes" id="UP000002704">
    <property type="component" value="Chromosome"/>
</dbReference>
<dbReference type="GO" id="GO:0005829">
    <property type="term" value="C:cytosol"/>
    <property type="evidence" value="ECO:0007669"/>
    <property type="project" value="TreeGrafter"/>
</dbReference>
<dbReference type="GO" id="GO:0004056">
    <property type="term" value="F:argininosuccinate lyase activity"/>
    <property type="evidence" value="ECO:0007669"/>
    <property type="project" value="UniProtKB-UniRule"/>
</dbReference>
<dbReference type="GO" id="GO:0042450">
    <property type="term" value="P:arginine biosynthetic process via ornithine"/>
    <property type="evidence" value="ECO:0007669"/>
    <property type="project" value="InterPro"/>
</dbReference>
<dbReference type="GO" id="GO:0006526">
    <property type="term" value="P:L-arginine biosynthetic process"/>
    <property type="evidence" value="ECO:0007669"/>
    <property type="project" value="UniProtKB-UniRule"/>
</dbReference>
<dbReference type="CDD" id="cd01359">
    <property type="entry name" value="Argininosuccinate_lyase"/>
    <property type="match status" value="1"/>
</dbReference>
<dbReference type="FunFam" id="1.20.200.10:FF:000015">
    <property type="entry name" value="argininosuccinate lyase isoform X2"/>
    <property type="match status" value="1"/>
</dbReference>
<dbReference type="Gene3D" id="1.10.40.30">
    <property type="entry name" value="Fumarase/aspartase (C-terminal domain)"/>
    <property type="match status" value="1"/>
</dbReference>
<dbReference type="Gene3D" id="1.20.200.10">
    <property type="entry name" value="Fumarase/aspartase (Central domain)"/>
    <property type="match status" value="1"/>
</dbReference>
<dbReference type="Gene3D" id="1.10.275.10">
    <property type="entry name" value="Fumarase/aspartase (N-terminal domain)"/>
    <property type="match status" value="1"/>
</dbReference>
<dbReference type="HAMAP" id="MF_00006">
    <property type="entry name" value="Arg_succ_lyase"/>
    <property type="match status" value="1"/>
</dbReference>
<dbReference type="InterPro" id="IPR029419">
    <property type="entry name" value="Arg_succ_lyase_C"/>
</dbReference>
<dbReference type="InterPro" id="IPR009049">
    <property type="entry name" value="Argininosuccinate_lyase"/>
</dbReference>
<dbReference type="InterPro" id="IPR024083">
    <property type="entry name" value="Fumarase/histidase_N"/>
</dbReference>
<dbReference type="InterPro" id="IPR020557">
    <property type="entry name" value="Fumarate_lyase_CS"/>
</dbReference>
<dbReference type="InterPro" id="IPR000362">
    <property type="entry name" value="Fumarate_lyase_fam"/>
</dbReference>
<dbReference type="InterPro" id="IPR022761">
    <property type="entry name" value="Fumarate_lyase_N"/>
</dbReference>
<dbReference type="InterPro" id="IPR008948">
    <property type="entry name" value="L-Aspartase-like"/>
</dbReference>
<dbReference type="NCBIfam" id="TIGR00838">
    <property type="entry name" value="argH"/>
    <property type="match status" value="1"/>
</dbReference>
<dbReference type="PANTHER" id="PTHR43814">
    <property type="entry name" value="ARGININOSUCCINATE LYASE"/>
    <property type="match status" value="1"/>
</dbReference>
<dbReference type="PANTHER" id="PTHR43814:SF1">
    <property type="entry name" value="ARGININOSUCCINATE LYASE"/>
    <property type="match status" value="1"/>
</dbReference>
<dbReference type="Pfam" id="PF14698">
    <property type="entry name" value="ASL_C2"/>
    <property type="match status" value="1"/>
</dbReference>
<dbReference type="Pfam" id="PF00206">
    <property type="entry name" value="Lyase_1"/>
    <property type="match status" value="1"/>
</dbReference>
<dbReference type="PRINTS" id="PR00145">
    <property type="entry name" value="ARGSUCLYASE"/>
</dbReference>
<dbReference type="PRINTS" id="PR00149">
    <property type="entry name" value="FUMRATELYASE"/>
</dbReference>
<dbReference type="SUPFAM" id="SSF48557">
    <property type="entry name" value="L-aspartase-like"/>
    <property type="match status" value="1"/>
</dbReference>
<dbReference type="PROSITE" id="PS00163">
    <property type="entry name" value="FUMARATE_LYASES"/>
    <property type="match status" value="1"/>
</dbReference>
<sequence length="475" mass="51912">MSQTTDRLWGARFKSGPSAALAALSRCPERYFRLTPYDLAGSKAHAGELQRAGLLDEQETRTMIEALDGIGADFAAGRIAPTLDDEDVHTFIERLLTERLGALGGKLRAGRSRNDQTANDLRLFLRDHVRTLAVEVLALQTALVDQAEQHVESICPGFTHLQQAQPIVFAHHLLAHAQSMLRDVQRLMDWDARTSLSPLGAAAMAGSAIARQPQQSAKEMGYAGVCENSIDAVASRDHVAEFLFIASMLGINISRLAEEFCLWSSRQFRWVDLDDAYATGSSIMPQKKNPDIAELARGKAGRLIGNLTGLLSTLKSLPLSYNRDLSEDKNGVLDSVDTLLLVLPAMAGMVATMTVNVEELRRQAPLGFTLATEVADWLAVRGVPFKEAHEITGALVQACEKHDLELWEASPALLAEIDPRLTADVRDSLTLEAAIAARSGWGGTAPQQVREQIGRLKTALAAQQQWTENYQGFRL</sequence>
<organism>
    <name type="scientific">Pseudomonas fluorescens (strain Pf0-1)</name>
    <dbReference type="NCBI Taxonomy" id="205922"/>
    <lineage>
        <taxon>Bacteria</taxon>
        <taxon>Pseudomonadati</taxon>
        <taxon>Pseudomonadota</taxon>
        <taxon>Gammaproteobacteria</taxon>
        <taxon>Pseudomonadales</taxon>
        <taxon>Pseudomonadaceae</taxon>
        <taxon>Pseudomonas</taxon>
    </lineage>
</organism>
<gene>
    <name evidence="1" type="primary">argH1</name>
    <name type="ordered locus">Pfl01_2852</name>
</gene>
<name>ARLY1_PSEPF</name>
<accession>Q3KCB2</accession>
<reference key="1">
    <citation type="journal article" date="2009" name="Genome Biol.">
        <title>Genomic and genetic analyses of diversity and plant interactions of Pseudomonas fluorescens.</title>
        <authorList>
            <person name="Silby M.W."/>
            <person name="Cerdeno-Tarraga A.M."/>
            <person name="Vernikos G.S."/>
            <person name="Giddens S.R."/>
            <person name="Jackson R.W."/>
            <person name="Preston G.M."/>
            <person name="Zhang X.-X."/>
            <person name="Moon C.D."/>
            <person name="Gehrig S.M."/>
            <person name="Godfrey S.A.C."/>
            <person name="Knight C.G."/>
            <person name="Malone J.G."/>
            <person name="Robinson Z."/>
            <person name="Spiers A.J."/>
            <person name="Harris S."/>
            <person name="Challis G.L."/>
            <person name="Yaxley A.M."/>
            <person name="Harris D."/>
            <person name="Seeger K."/>
            <person name="Murphy L."/>
            <person name="Rutter S."/>
            <person name="Squares R."/>
            <person name="Quail M.A."/>
            <person name="Saunders E."/>
            <person name="Mavromatis K."/>
            <person name="Brettin T.S."/>
            <person name="Bentley S.D."/>
            <person name="Hothersall J."/>
            <person name="Stephens E."/>
            <person name="Thomas C.M."/>
            <person name="Parkhill J."/>
            <person name="Levy S.B."/>
            <person name="Rainey P.B."/>
            <person name="Thomson N.R."/>
        </authorList>
    </citation>
    <scope>NUCLEOTIDE SEQUENCE [LARGE SCALE GENOMIC DNA]</scope>
    <source>
        <strain>Pf0-1</strain>
    </source>
</reference>
<comment type="catalytic activity">
    <reaction evidence="1">
        <text>2-(N(omega)-L-arginino)succinate = fumarate + L-arginine</text>
        <dbReference type="Rhea" id="RHEA:24020"/>
        <dbReference type="ChEBI" id="CHEBI:29806"/>
        <dbReference type="ChEBI" id="CHEBI:32682"/>
        <dbReference type="ChEBI" id="CHEBI:57472"/>
        <dbReference type="EC" id="4.3.2.1"/>
    </reaction>
</comment>
<comment type="pathway">
    <text evidence="1">Amino-acid biosynthesis; L-arginine biosynthesis; L-arginine from L-ornithine and carbamoyl phosphate: step 3/3.</text>
</comment>
<comment type="subcellular location">
    <subcellularLocation>
        <location evidence="1">Cytoplasm</location>
    </subcellularLocation>
</comment>
<comment type="similarity">
    <text evidence="1">Belongs to the lyase 1 family. Argininosuccinate lyase subfamily.</text>
</comment>
<proteinExistence type="inferred from homology"/>
<feature type="chain" id="PRO_0000240752" description="Argininosuccinate lyase 1">
    <location>
        <begin position="1"/>
        <end position="475"/>
    </location>
</feature>
<protein>
    <recommendedName>
        <fullName evidence="1">Argininosuccinate lyase 1</fullName>
        <shortName evidence="1">ASAL 1</shortName>
        <ecNumber evidence="1">4.3.2.1</ecNumber>
    </recommendedName>
    <alternativeName>
        <fullName evidence="1">Arginosuccinase 1</fullName>
    </alternativeName>
</protein>